<protein>
    <recommendedName>
        <fullName>Synapsin-1</fullName>
    </recommendedName>
    <alternativeName>
        <fullName>Brain protein 4.1</fullName>
    </alternativeName>
    <alternativeName>
        <fullName>Synapsin I</fullName>
    </alternativeName>
</protein>
<evidence type="ECO:0000250" key="1"/>
<evidence type="ECO:0000250" key="2">
    <source>
        <dbReference type="UniProtKB" id="O88935"/>
    </source>
</evidence>
<evidence type="ECO:0000250" key="3">
    <source>
        <dbReference type="UniProtKB" id="P09951"/>
    </source>
</evidence>
<evidence type="ECO:0000250" key="4">
    <source>
        <dbReference type="UniProtKB" id="P17599"/>
    </source>
</evidence>
<evidence type="ECO:0000256" key="5">
    <source>
        <dbReference type="SAM" id="MobiDB-lite"/>
    </source>
</evidence>
<evidence type="ECO:0000269" key="6">
    <source>
    </source>
</evidence>
<evidence type="ECO:0000269" key="7">
    <source>
    </source>
</evidence>
<evidence type="ECO:0000269" key="8">
    <source>
    </source>
</evidence>
<evidence type="ECO:0000269" key="9">
    <source>
    </source>
</evidence>
<evidence type="ECO:0000305" key="10"/>
<evidence type="ECO:0007744" key="11">
    <source>
    </source>
</evidence>
<evidence type="ECO:0007744" key="12">
    <source>
    </source>
</evidence>
<dbReference type="EMBL" id="M58378">
    <property type="protein sequence ID" value="AAC41930.1"/>
    <property type="molecule type" value="Genomic_DNA"/>
</dbReference>
<dbReference type="EMBL" id="M58321">
    <property type="protein sequence ID" value="AAC41930.1"/>
    <property type="status" value="JOINED"/>
    <property type="molecule type" value="Genomic_DNA"/>
</dbReference>
<dbReference type="EMBL" id="M58341">
    <property type="protein sequence ID" value="AAC41930.1"/>
    <property type="status" value="JOINED"/>
    <property type="molecule type" value="Genomic_DNA"/>
</dbReference>
<dbReference type="EMBL" id="M58351">
    <property type="protein sequence ID" value="AAC41930.1"/>
    <property type="status" value="JOINED"/>
    <property type="molecule type" value="Genomic_DNA"/>
</dbReference>
<dbReference type="EMBL" id="M58353">
    <property type="protein sequence ID" value="AAC41930.1"/>
    <property type="status" value="JOINED"/>
    <property type="molecule type" value="Genomic_DNA"/>
</dbReference>
<dbReference type="EMBL" id="M58359">
    <property type="protein sequence ID" value="AAC41930.1"/>
    <property type="status" value="JOINED"/>
    <property type="molecule type" value="Genomic_DNA"/>
</dbReference>
<dbReference type="EMBL" id="M58371">
    <property type="protein sequence ID" value="AAC41930.1"/>
    <property type="status" value="JOINED"/>
    <property type="molecule type" value="Genomic_DNA"/>
</dbReference>
<dbReference type="EMBL" id="M58372">
    <property type="protein sequence ID" value="AAC41930.1"/>
    <property type="status" value="JOINED"/>
    <property type="molecule type" value="Genomic_DNA"/>
</dbReference>
<dbReference type="EMBL" id="M58373">
    <property type="protein sequence ID" value="AAC41930.1"/>
    <property type="status" value="JOINED"/>
    <property type="molecule type" value="Genomic_DNA"/>
</dbReference>
<dbReference type="EMBL" id="M58374">
    <property type="protein sequence ID" value="AAC41930.1"/>
    <property type="status" value="JOINED"/>
    <property type="molecule type" value="Genomic_DNA"/>
</dbReference>
<dbReference type="EMBL" id="M58375">
    <property type="protein sequence ID" value="AAC41930.1"/>
    <property type="status" value="JOINED"/>
    <property type="molecule type" value="Genomic_DNA"/>
</dbReference>
<dbReference type="EMBL" id="M58376">
    <property type="protein sequence ID" value="AAC41930.1"/>
    <property type="status" value="JOINED"/>
    <property type="molecule type" value="Genomic_DNA"/>
</dbReference>
<dbReference type="EMBL" id="M58377">
    <property type="protein sequence ID" value="AAC41930.1"/>
    <property type="status" value="JOINED"/>
    <property type="molecule type" value="Genomic_DNA"/>
</dbReference>
<dbReference type="EMBL" id="M58378">
    <property type="protein sequence ID" value="AAC41931.1"/>
    <property type="status" value="ALT_SEQ"/>
    <property type="molecule type" value="Genomic_DNA"/>
</dbReference>
<dbReference type="EMBL" id="M58321">
    <property type="protein sequence ID" value="AAC41931.1"/>
    <property type="status" value="JOINED"/>
    <property type="molecule type" value="Genomic_DNA"/>
</dbReference>
<dbReference type="EMBL" id="M58341">
    <property type="protein sequence ID" value="AAC41931.1"/>
    <property type="status" value="JOINED"/>
    <property type="molecule type" value="Genomic_DNA"/>
</dbReference>
<dbReference type="EMBL" id="M58351">
    <property type="protein sequence ID" value="AAC41931.1"/>
    <property type="status" value="JOINED"/>
    <property type="molecule type" value="Genomic_DNA"/>
</dbReference>
<dbReference type="EMBL" id="M58353">
    <property type="protein sequence ID" value="AAC41931.1"/>
    <property type="status" value="JOINED"/>
    <property type="molecule type" value="Genomic_DNA"/>
</dbReference>
<dbReference type="EMBL" id="M58359">
    <property type="protein sequence ID" value="AAC41931.1"/>
    <property type="status" value="JOINED"/>
    <property type="molecule type" value="Genomic_DNA"/>
</dbReference>
<dbReference type="EMBL" id="M58371">
    <property type="protein sequence ID" value="AAC41931.1"/>
    <property type="status" value="JOINED"/>
    <property type="molecule type" value="Genomic_DNA"/>
</dbReference>
<dbReference type="EMBL" id="M58372">
    <property type="protein sequence ID" value="AAC41931.1"/>
    <property type="status" value="JOINED"/>
    <property type="molecule type" value="Genomic_DNA"/>
</dbReference>
<dbReference type="EMBL" id="M58373">
    <property type="protein sequence ID" value="AAC41931.1"/>
    <property type="status" value="JOINED"/>
    <property type="molecule type" value="Genomic_DNA"/>
</dbReference>
<dbReference type="EMBL" id="M58374">
    <property type="protein sequence ID" value="AAC41931.1"/>
    <property type="status" value="JOINED"/>
    <property type="molecule type" value="Genomic_DNA"/>
</dbReference>
<dbReference type="EMBL" id="M58375">
    <property type="protein sequence ID" value="AAC41931.1"/>
    <property type="status" value="JOINED"/>
    <property type="molecule type" value="Genomic_DNA"/>
</dbReference>
<dbReference type="EMBL" id="M58376">
    <property type="protein sequence ID" value="AAC41931.1"/>
    <property type="status" value="JOINED"/>
    <property type="molecule type" value="Genomic_DNA"/>
</dbReference>
<dbReference type="EMBL" id="M58377">
    <property type="protein sequence ID" value="AAC41931.1"/>
    <property type="status" value="JOINED"/>
    <property type="molecule type" value="Genomic_DNA"/>
</dbReference>
<dbReference type="EMBL" id="AL009172">
    <property type="status" value="NOT_ANNOTATED_CDS"/>
    <property type="molecule type" value="Genomic_DNA"/>
</dbReference>
<dbReference type="EMBL" id="Z84466">
    <property type="status" value="NOT_ANNOTATED_CDS"/>
    <property type="molecule type" value="Genomic_DNA"/>
</dbReference>
<dbReference type="EMBL" id="CH471164">
    <property type="protein sequence ID" value="EAW59313.1"/>
    <property type="molecule type" value="Genomic_DNA"/>
</dbReference>
<dbReference type="EMBL" id="M55301">
    <property type="protein sequence ID" value="AAA60608.1"/>
    <property type="molecule type" value="Genomic_DNA"/>
</dbReference>
<dbReference type="CCDS" id="CCDS14280.1">
    <molecule id="P17600-1"/>
</dbReference>
<dbReference type="CCDS" id="CCDS35233.1">
    <molecule id="P17600-2"/>
</dbReference>
<dbReference type="PIR" id="A35363">
    <property type="entry name" value="A35363"/>
</dbReference>
<dbReference type="RefSeq" id="NP_008881.2">
    <molecule id="P17600-1"/>
    <property type="nucleotide sequence ID" value="NM_006950.3"/>
</dbReference>
<dbReference type="RefSeq" id="NP_598006.1">
    <molecule id="P17600-2"/>
    <property type="nucleotide sequence ID" value="NM_133499.2"/>
</dbReference>
<dbReference type="SMR" id="P17600"/>
<dbReference type="BioGRID" id="112719">
    <property type="interactions" value="41"/>
</dbReference>
<dbReference type="CORUM" id="P17600"/>
<dbReference type="FunCoup" id="P17600">
    <property type="interactions" value="257"/>
</dbReference>
<dbReference type="IntAct" id="P17600">
    <property type="interactions" value="27"/>
</dbReference>
<dbReference type="MINT" id="P17600"/>
<dbReference type="STRING" id="9606.ENSP00000295987"/>
<dbReference type="DrugBank" id="DB02930">
    <property type="generic name" value="Adenosine 5'-[gamma-thio]triphosphate"/>
</dbReference>
<dbReference type="GlyCosmos" id="P17600">
    <property type="glycosylation" value="13 sites, 1 glycan"/>
</dbReference>
<dbReference type="GlyGen" id="P17600">
    <property type="glycosylation" value="14 sites, 1 O-linked glycan (5 sites)"/>
</dbReference>
<dbReference type="iPTMnet" id="P17600"/>
<dbReference type="PhosphoSitePlus" id="P17600"/>
<dbReference type="SwissPalm" id="P17600"/>
<dbReference type="BioMuta" id="SYN1"/>
<dbReference type="DMDM" id="73920800"/>
<dbReference type="jPOST" id="P17600"/>
<dbReference type="MassIVE" id="P17600"/>
<dbReference type="PaxDb" id="9606-ENSP00000295987"/>
<dbReference type="PeptideAtlas" id="P17600"/>
<dbReference type="ProteomicsDB" id="53494">
    <molecule id="P17600-1"/>
</dbReference>
<dbReference type="ProteomicsDB" id="53495">
    <molecule id="P17600-2"/>
</dbReference>
<dbReference type="ABCD" id="P17600">
    <property type="antibodies" value="1 sequenced antibody"/>
</dbReference>
<dbReference type="Antibodypedia" id="403">
    <property type="antibodies" value="1092 antibodies from 45 providers"/>
</dbReference>
<dbReference type="DNASU" id="6853"/>
<dbReference type="Ensembl" id="ENST00000295987.13">
    <molecule id="P17600-1"/>
    <property type="protein sequence ID" value="ENSP00000295987.7"/>
    <property type="gene ID" value="ENSG00000008056.14"/>
</dbReference>
<dbReference type="Ensembl" id="ENST00000340666.5">
    <molecule id="P17600-2"/>
    <property type="protein sequence ID" value="ENSP00000343206.4"/>
    <property type="gene ID" value="ENSG00000008056.14"/>
</dbReference>
<dbReference type="GeneID" id="6853"/>
<dbReference type="KEGG" id="hsa:6853"/>
<dbReference type="MANE-Select" id="ENST00000295987.13">
    <property type="protein sequence ID" value="ENSP00000295987.7"/>
    <property type="RefSeq nucleotide sequence ID" value="NM_006950.3"/>
    <property type="RefSeq protein sequence ID" value="NP_008881.2"/>
</dbReference>
<dbReference type="UCSC" id="uc004did.4">
    <molecule id="P17600-1"/>
    <property type="organism name" value="human"/>
</dbReference>
<dbReference type="AGR" id="HGNC:11494"/>
<dbReference type="CTD" id="6853"/>
<dbReference type="DisGeNET" id="6853"/>
<dbReference type="GeneCards" id="SYN1"/>
<dbReference type="HGNC" id="HGNC:11494">
    <property type="gene designation" value="SYN1"/>
</dbReference>
<dbReference type="HPA" id="ENSG00000008056">
    <property type="expression patterns" value="Tissue enriched (brain)"/>
</dbReference>
<dbReference type="MalaCards" id="SYN1"/>
<dbReference type="MIM" id="300115">
    <property type="type" value="phenotype"/>
</dbReference>
<dbReference type="MIM" id="300491">
    <property type="type" value="phenotype"/>
</dbReference>
<dbReference type="MIM" id="313440">
    <property type="type" value="gene"/>
</dbReference>
<dbReference type="neXtProt" id="NX_P17600"/>
<dbReference type="OpenTargets" id="ENSG00000008056"/>
<dbReference type="Orphanet" id="85294">
    <property type="disease" value="X-linked epilepsy-learning disabilities-behavior disorders syndrome"/>
</dbReference>
<dbReference type="PharmGKB" id="PA36276"/>
<dbReference type="VEuPathDB" id="HostDB:ENSG00000008056"/>
<dbReference type="eggNOG" id="KOG3895">
    <property type="taxonomic scope" value="Eukaryota"/>
</dbReference>
<dbReference type="GeneTree" id="ENSGT00940000161978"/>
<dbReference type="HOGENOM" id="CLU_010582_3_0_1"/>
<dbReference type="InParanoid" id="P17600"/>
<dbReference type="OMA" id="QWITEVS"/>
<dbReference type="OrthoDB" id="10249572at2759"/>
<dbReference type="PAN-GO" id="P17600">
    <property type="GO annotations" value="2 GO annotations based on evolutionary models"/>
</dbReference>
<dbReference type="PhylomeDB" id="P17600"/>
<dbReference type="TreeFam" id="TF319919"/>
<dbReference type="PathwayCommons" id="P17600"/>
<dbReference type="Reactome" id="R-HSA-181429">
    <property type="pathway name" value="Serotonin Neurotransmitter Release Cycle"/>
</dbReference>
<dbReference type="Reactome" id="R-HSA-212676">
    <property type="pathway name" value="Dopamine Neurotransmitter Release Cycle"/>
</dbReference>
<dbReference type="Reactome" id="R-HSA-9662360">
    <property type="pathway name" value="Sensory processing of sound by inner hair cells of the cochlea"/>
</dbReference>
<dbReference type="SignaLink" id="P17600"/>
<dbReference type="SIGNOR" id="P17600"/>
<dbReference type="BioGRID-ORCS" id="6853">
    <property type="hits" value="11 hits in 775 CRISPR screens"/>
</dbReference>
<dbReference type="CD-CODE" id="0D48A13A">
    <property type="entry name" value="Synthetic Condensate 000121"/>
</dbReference>
<dbReference type="CD-CODE" id="84137BFC">
    <property type="entry name" value="Synthetic Condensate 000112"/>
</dbReference>
<dbReference type="CD-CODE" id="C2ED57FB">
    <property type="entry name" value="Synthetic Condensate 000110"/>
</dbReference>
<dbReference type="CD-CODE" id="FB4E32DD">
    <property type="entry name" value="Presynaptic clusters and postsynaptic densities"/>
</dbReference>
<dbReference type="CD-CODE" id="FF4E772B">
    <property type="entry name" value="Synthetic Condensate 000083"/>
</dbReference>
<dbReference type="ChiTaRS" id="SYN1">
    <property type="organism name" value="human"/>
</dbReference>
<dbReference type="GeneWiki" id="Synapsin_I"/>
<dbReference type="GenomeRNAi" id="6853"/>
<dbReference type="Pharos" id="P17600">
    <property type="development level" value="Tbio"/>
</dbReference>
<dbReference type="PRO" id="PR:P17600"/>
<dbReference type="Proteomes" id="UP000005640">
    <property type="component" value="Chromosome X"/>
</dbReference>
<dbReference type="RNAct" id="P17600">
    <property type="molecule type" value="protein"/>
</dbReference>
<dbReference type="Bgee" id="ENSG00000008056">
    <property type="expression patterns" value="Expressed in right frontal lobe and 126 other cell types or tissues"/>
</dbReference>
<dbReference type="ExpressionAtlas" id="P17600">
    <property type="expression patterns" value="baseline and differential"/>
</dbReference>
<dbReference type="GO" id="GO:0030424">
    <property type="term" value="C:axon"/>
    <property type="evidence" value="ECO:0007669"/>
    <property type="project" value="Ensembl"/>
</dbReference>
<dbReference type="GO" id="GO:0044297">
    <property type="term" value="C:cell body"/>
    <property type="evidence" value="ECO:0007669"/>
    <property type="project" value="Ensembl"/>
</dbReference>
<dbReference type="GO" id="GO:0005856">
    <property type="term" value="C:cytoskeleton"/>
    <property type="evidence" value="ECO:0000314"/>
    <property type="project" value="ARUK-UCL"/>
</dbReference>
<dbReference type="GO" id="GO:0030425">
    <property type="term" value="C:dendrite"/>
    <property type="evidence" value="ECO:0007669"/>
    <property type="project" value="Ensembl"/>
</dbReference>
<dbReference type="GO" id="GO:0098850">
    <property type="term" value="C:extrinsic component of synaptic vesicle membrane"/>
    <property type="evidence" value="ECO:0007669"/>
    <property type="project" value="Ensembl"/>
</dbReference>
<dbReference type="GO" id="GO:0005794">
    <property type="term" value="C:Golgi apparatus"/>
    <property type="evidence" value="ECO:0007669"/>
    <property type="project" value="UniProtKB-SubCell"/>
</dbReference>
<dbReference type="GO" id="GO:0014069">
    <property type="term" value="C:postsynaptic density"/>
    <property type="evidence" value="ECO:0007669"/>
    <property type="project" value="Ensembl"/>
</dbReference>
<dbReference type="GO" id="GO:0098793">
    <property type="term" value="C:presynapse"/>
    <property type="evidence" value="ECO:0000314"/>
    <property type="project" value="UniProtKB"/>
</dbReference>
<dbReference type="GO" id="GO:0048786">
    <property type="term" value="C:presynaptic active zone"/>
    <property type="evidence" value="ECO:0007669"/>
    <property type="project" value="Ensembl"/>
</dbReference>
<dbReference type="GO" id="GO:0098685">
    <property type="term" value="C:Schaffer collateral - CA1 synapse"/>
    <property type="evidence" value="ECO:0007669"/>
    <property type="project" value="Ensembl"/>
</dbReference>
<dbReference type="GO" id="GO:0008021">
    <property type="term" value="C:synaptic vesicle"/>
    <property type="evidence" value="ECO:0000304"/>
    <property type="project" value="ParkinsonsUK-UCL"/>
</dbReference>
<dbReference type="GO" id="GO:0030672">
    <property type="term" value="C:synaptic vesicle membrane"/>
    <property type="evidence" value="ECO:0000318"/>
    <property type="project" value="GO_Central"/>
</dbReference>
<dbReference type="GO" id="GO:0000795">
    <property type="term" value="C:synaptonemal complex"/>
    <property type="evidence" value="ECO:0007669"/>
    <property type="project" value="Ensembl"/>
</dbReference>
<dbReference type="GO" id="GO:0003779">
    <property type="term" value="F:actin binding"/>
    <property type="evidence" value="ECO:0007669"/>
    <property type="project" value="UniProtKB-KW"/>
</dbReference>
<dbReference type="GO" id="GO:0005524">
    <property type="term" value="F:ATP binding"/>
    <property type="evidence" value="ECO:0000304"/>
    <property type="project" value="ParkinsonsUK-UCL"/>
</dbReference>
<dbReference type="GO" id="GO:0048306">
    <property type="term" value="F:calcium-dependent protein binding"/>
    <property type="evidence" value="ECO:0007669"/>
    <property type="project" value="Ensembl"/>
</dbReference>
<dbReference type="GO" id="GO:0106006">
    <property type="term" value="F:cytoskeletal protein-membrane anchor activity"/>
    <property type="evidence" value="ECO:0000304"/>
    <property type="project" value="UniProtKB"/>
</dbReference>
<dbReference type="GO" id="GO:0042802">
    <property type="term" value="F:identical protein binding"/>
    <property type="evidence" value="ECO:0007669"/>
    <property type="project" value="Ensembl"/>
</dbReference>
<dbReference type="GO" id="GO:0019901">
    <property type="term" value="F:protein kinase binding"/>
    <property type="evidence" value="ECO:0000250"/>
    <property type="project" value="ParkinsonsUK-UCL"/>
</dbReference>
<dbReference type="GO" id="GO:0007268">
    <property type="term" value="P:chemical synaptic transmission"/>
    <property type="evidence" value="ECO:0000304"/>
    <property type="project" value="ProtInc"/>
</dbReference>
<dbReference type="GO" id="GO:0048666">
    <property type="term" value="P:neuron development"/>
    <property type="evidence" value="ECO:0007669"/>
    <property type="project" value="Ensembl"/>
</dbReference>
<dbReference type="GO" id="GO:0007269">
    <property type="term" value="P:neurotransmitter secretion"/>
    <property type="evidence" value="ECO:0007669"/>
    <property type="project" value="Ensembl"/>
</dbReference>
<dbReference type="GO" id="GO:0046928">
    <property type="term" value="P:regulation of neurotransmitter secretion"/>
    <property type="evidence" value="ECO:0000304"/>
    <property type="project" value="ParkinsonsUK-UCL"/>
</dbReference>
<dbReference type="GO" id="GO:0098693">
    <property type="term" value="P:regulation of synaptic vesicle cycle"/>
    <property type="evidence" value="ECO:0007669"/>
    <property type="project" value="Ensembl"/>
</dbReference>
<dbReference type="GO" id="GO:2000300">
    <property type="term" value="P:regulation of synaptic vesicle exocytosis"/>
    <property type="evidence" value="ECO:0000315"/>
    <property type="project" value="UniProtKB"/>
</dbReference>
<dbReference type="GO" id="GO:0050808">
    <property type="term" value="P:synapse organization"/>
    <property type="evidence" value="ECO:0000318"/>
    <property type="project" value="GO_Central"/>
</dbReference>
<dbReference type="GO" id="GO:0097091">
    <property type="term" value="P:synaptic vesicle clustering"/>
    <property type="evidence" value="ECO:0000318"/>
    <property type="project" value="GO_Central"/>
</dbReference>
<dbReference type="FunFam" id="3.30.1490.20:FF:000008">
    <property type="entry name" value="Synapsin I"/>
    <property type="match status" value="1"/>
</dbReference>
<dbReference type="FunFam" id="3.30.470.20:FF:000042">
    <property type="entry name" value="Synapsin III"/>
    <property type="match status" value="1"/>
</dbReference>
<dbReference type="FunFam" id="3.40.50.20:FF:000008">
    <property type="entry name" value="Synapsin III"/>
    <property type="match status" value="1"/>
</dbReference>
<dbReference type="Gene3D" id="3.40.50.20">
    <property type="match status" value="1"/>
</dbReference>
<dbReference type="Gene3D" id="3.30.1490.20">
    <property type="entry name" value="ATP-grasp fold, A domain"/>
    <property type="match status" value="1"/>
</dbReference>
<dbReference type="Gene3D" id="3.30.470.20">
    <property type="entry name" value="ATP-grasp fold, B domain"/>
    <property type="match status" value="1"/>
</dbReference>
<dbReference type="InterPro" id="IPR013815">
    <property type="entry name" value="ATP_grasp_subdomain_1"/>
</dbReference>
<dbReference type="InterPro" id="IPR016185">
    <property type="entry name" value="PreATP-grasp_dom_sf"/>
</dbReference>
<dbReference type="InterPro" id="IPR001359">
    <property type="entry name" value="Synapsin"/>
</dbReference>
<dbReference type="InterPro" id="IPR020898">
    <property type="entry name" value="Synapsin_ATP-bd_dom"/>
</dbReference>
<dbReference type="InterPro" id="IPR019735">
    <property type="entry name" value="Synapsin_CS"/>
</dbReference>
<dbReference type="InterPro" id="IPR019736">
    <property type="entry name" value="Synapsin_P_site"/>
</dbReference>
<dbReference type="InterPro" id="IPR020897">
    <property type="entry name" value="Synapsin_pre-ATP-grasp_dom"/>
</dbReference>
<dbReference type="PANTHER" id="PTHR10841">
    <property type="entry name" value="SYNAPSIN"/>
    <property type="match status" value="1"/>
</dbReference>
<dbReference type="PANTHER" id="PTHR10841:SF24">
    <property type="entry name" value="SYNAPSIN-1"/>
    <property type="match status" value="1"/>
</dbReference>
<dbReference type="Pfam" id="PF02078">
    <property type="entry name" value="Synapsin"/>
    <property type="match status" value="1"/>
</dbReference>
<dbReference type="Pfam" id="PF02750">
    <property type="entry name" value="Synapsin_C"/>
    <property type="match status" value="1"/>
</dbReference>
<dbReference type="Pfam" id="PF10581">
    <property type="entry name" value="Synapsin_N"/>
    <property type="match status" value="1"/>
</dbReference>
<dbReference type="PRINTS" id="PR01368">
    <property type="entry name" value="SYNAPSIN"/>
</dbReference>
<dbReference type="SUPFAM" id="SSF56059">
    <property type="entry name" value="Glutathione synthetase ATP-binding domain-like"/>
    <property type="match status" value="1"/>
</dbReference>
<dbReference type="SUPFAM" id="SSF52440">
    <property type="entry name" value="PreATP-grasp domain"/>
    <property type="match status" value="1"/>
</dbReference>
<dbReference type="PROSITE" id="PS00415">
    <property type="entry name" value="SYNAPSIN_1"/>
    <property type="match status" value="1"/>
</dbReference>
<dbReference type="PROSITE" id="PS00416">
    <property type="entry name" value="SYNAPSIN_2"/>
    <property type="match status" value="1"/>
</dbReference>
<organism>
    <name type="scientific">Homo sapiens</name>
    <name type="common">Human</name>
    <dbReference type="NCBI Taxonomy" id="9606"/>
    <lineage>
        <taxon>Eukaryota</taxon>
        <taxon>Metazoa</taxon>
        <taxon>Chordata</taxon>
        <taxon>Craniata</taxon>
        <taxon>Vertebrata</taxon>
        <taxon>Euteleostomi</taxon>
        <taxon>Mammalia</taxon>
        <taxon>Eutheria</taxon>
        <taxon>Euarchontoglires</taxon>
        <taxon>Primates</taxon>
        <taxon>Haplorrhini</taxon>
        <taxon>Catarrhini</taxon>
        <taxon>Hominidae</taxon>
        <taxon>Homo</taxon>
    </lineage>
</organism>
<comment type="function">
    <text evidence="2 3 7 8">Neuronal phosphoprotein that coats synaptic vesicles, and binds to the cytoskeleton. Acts as a regulator of synaptic vesicles trafficking, involved in the control of neurotransmitter release at the pre-synaptic terminal (PubMed:21441247, PubMed:23406870). Also involved in the regulation of axon outgrowth and synaptogenesis (By similarity). The complex formed with NOS1 and CAPON proteins is necessary for specific nitric-oxid functions at a presynaptic level (By similarity).</text>
</comment>
<comment type="subunit">
    <text evidence="2 3 8">Homodimer (By similarity). Can form oligomers with SYN2 (PubMed:23406870). Interacts with CAPON. Forms a ternary complex with NOS1 (By similarity). Isoform Ib interacts with PRNP (By similarity).</text>
</comment>
<comment type="subcellular location">
    <subcellularLocation>
        <location evidence="2">Synapse</location>
    </subcellularLocation>
    <subcellularLocation>
        <location evidence="2">Golgi apparatus</location>
    </subcellularLocation>
    <subcellularLocation>
        <location evidence="7">Presynapse</location>
    </subcellularLocation>
    <subcellularLocation>
        <location evidence="3">Cytoplasmic vesicle</location>
        <location evidence="3">Secretory vesicle</location>
        <location evidence="3">Synaptic vesicle</location>
    </subcellularLocation>
    <text evidence="3">Dissociates from synaptic vesicles and redistributes into the axon during action potential firing, in a step that precedes fusion of vesicles with the plasma membrane. Reclusters to presynapses after the cessation of synaptic activity.</text>
</comment>
<comment type="alternative products">
    <event type="alternative splicing"/>
    <isoform>
        <id>P17600-1</id>
        <name>IA</name>
        <sequence type="displayed"/>
    </isoform>
    <isoform>
        <id>P17600-2</id>
        <name>IB</name>
        <sequence type="described" ref="VSP_006316 VSP_006317"/>
    </isoform>
</comment>
<comment type="domain">
    <text evidence="1">The A region binds phospholipids with a preference for negatively charged species.</text>
</comment>
<comment type="PTM">
    <text evidence="3 7">Substrate of different protein kinases. Phosphorylated by CaMK2 and MAPK1 (PubMed:21441247). Phosphorylation, including phosphorylation at Ser-9, promotes synapsin-1 dissociation from synaptic vesicles, regulates its rate of dispersion, and controls the kinetics of vesicle pool turnover and neurotransmitter release (By similarity) (PubMed:21441247).</text>
</comment>
<comment type="disease" evidence="6">
    <disease id="DI-00470">
        <name>Epilepsy, X-linked 1, with variable learning disabilities and behavior disorders</name>
        <acronym>EPILX1</acronym>
        <description>A neurologic disorder characterized by variable combinations of epilepsy, learning difficulties, macrocephaly, and aggressive behavior.</description>
        <dbReference type="MIM" id="300491"/>
    </disease>
    <text>The disease is caused by variants affecting the gene represented in this entry.</text>
</comment>
<comment type="disease" evidence="7 8 9">
    <disease id="DI-06017">
        <name>Intellectual developmental disorder, X-linked 50</name>
        <acronym>XLID50</acronym>
        <description>A form of intellectual disability, a disorder characterized by significantly below average general intellectual functioning associated with impairments in adaptive behavior and manifested during the developmental period. Intellectual deficiency is the only primary symptom of non-syndromic X-linked forms, while syndromic forms present with associated physical, neurological and/or psychiatric manifestations.</description>
        <dbReference type="MIM" id="300115"/>
    </disease>
    <text>The disease is caused by variants affecting the gene represented in this entry.</text>
</comment>
<comment type="similarity">
    <text evidence="10">Belongs to the synapsin family.</text>
</comment>
<proteinExistence type="evidence at protein level"/>
<gene>
    <name type="primary">SYN1</name>
</gene>
<accession>P17600</accession>
<accession>B1AJQ1</accession>
<accession>O75825</accession>
<accession>Q5H9A9</accession>
<reference key="1">
    <citation type="journal article" date="1990" name="J. Biol. Chem.">
        <title>The structure of the human synapsin I gene and protein.</title>
        <authorList>
            <person name="Suedhof T.C."/>
        </authorList>
    </citation>
    <scope>NUCLEOTIDE SEQUENCE [GENOMIC DNA]</scope>
    <scope>ALTERNATIVE SPLICING</scope>
    <source>
        <tissue>Brain</tissue>
    </source>
</reference>
<reference key="2">
    <citation type="journal article" date="2005" name="Nature">
        <title>The DNA sequence of the human X chromosome.</title>
        <authorList>
            <person name="Ross M.T."/>
            <person name="Grafham D.V."/>
            <person name="Coffey A.J."/>
            <person name="Scherer S."/>
            <person name="McLay K."/>
            <person name="Muzny D."/>
            <person name="Platzer M."/>
            <person name="Howell G.R."/>
            <person name="Burrows C."/>
            <person name="Bird C.P."/>
            <person name="Frankish A."/>
            <person name="Lovell F.L."/>
            <person name="Howe K.L."/>
            <person name="Ashurst J.L."/>
            <person name="Fulton R.S."/>
            <person name="Sudbrak R."/>
            <person name="Wen G."/>
            <person name="Jones M.C."/>
            <person name="Hurles M.E."/>
            <person name="Andrews T.D."/>
            <person name="Scott C.E."/>
            <person name="Searle S."/>
            <person name="Ramser J."/>
            <person name="Whittaker A."/>
            <person name="Deadman R."/>
            <person name="Carter N.P."/>
            <person name="Hunt S.E."/>
            <person name="Chen R."/>
            <person name="Cree A."/>
            <person name="Gunaratne P."/>
            <person name="Havlak P."/>
            <person name="Hodgson A."/>
            <person name="Metzker M.L."/>
            <person name="Richards S."/>
            <person name="Scott G."/>
            <person name="Steffen D."/>
            <person name="Sodergren E."/>
            <person name="Wheeler D.A."/>
            <person name="Worley K.C."/>
            <person name="Ainscough R."/>
            <person name="Ambrose K.D."/>
            <person name="Ansari-Lari M.A."/>
            <person name="Aradhya S."/>
            <person name="Ashwell R.I."/>
            <person name="Babbage A.K."/>
            <person name="Bagguley C.L."/>
            <person name="Ballabio A."/>
            <person name="Banerjee R."/>
            <person name="Barker G.E."/>
            <person name="Barlow K.F."/>
            <person name="Barrett I.P."/>
            <person name="Bates K.N."/>
            <person name="Beare D.M."/>
            <person name="Beasley H."/>
            <person name="Beasley O."/>
            <person name="Beck A."/>
            <person name="Bethel G."/>
            <person name="Blechschmidt K."/>
            <person name="Brady N."/>
            <person name="Bray-Allen S."/>
            <person name="Bridgeman A.M."/>
            <person name="Brown A.J."/>
            <person name="Brown M.J."/>
            <person name="Bonnin D."/>
            <person name="Bruford E.A."/>
            <person name="Buhay C."/>
            <person name="Burch P."/>
            <person name="Burford D."/>
            <person name="Burgess J."/>
            <person name="Burrill W."/>
            <person name="Burton J."/>
            <person name="Bye J.M."/>
            <person name="Carder C."/>
            <person name="Carrel L."/>
            <person name="Chako J."/>
            <person name="Chapman J.C."/>
            <person name="Chavez D."/>
            <person name="Chen E."/>
            <person name="Chen G."/>
            <person name="Chen Y."/>
            <person name="Chen Z."/>
            <person name="Chinault C."/>
            <person name="Ciccodicola A."/>
            <person name="Clark S.Y."/>
            <person name="Clarke G."/>
            <person name="Clee C.M."/>
            <person name="Clegg S."/>
            <person name="Clerc-Blankenburg K."/>
            <person name="Clifford K."/>
            <person name="Cobley V."/>
            <person name="Cole C.G."/>
            <person name="Conquer J.S."/>
            <person name="Corby N."/>
            <person name="Connor R.E."/>
            <person name="David R."/>
            <person name="Davies J."/>
            <person name="Davis C."/>
            <person name="Davis J."/>
            <person name="Delgado O."/>
            <person name="Deshazo D."/>
            <person name="Dhami P."/>
            <person name="Ding Y."/>
            <person name="Dinh H."/>
            <person name="Dodsworth S."/>
            <person name="Draper H."/>
            <person name="Dugan-Rocha S."/>
            <person name="Dunham A."/>
            <person name="Dunn M."/>
            <person name="Durbin K.J."/>
            <person name="Dutta I."/>
            <person name="Eades T."/>
            <person name="Ellwood M."/>
            <person name="Emery-Cohen A."/>
            <person name="Errington H."/>
            <person name="Evans K.L."/>
            <person name="Faulkner L."/>
            <person name="Francis F."/>
            <person name="Frankland J."/>
            <person name="Fraser A.E."/>
            <person name="Galgoczy P."/>
            <person name="Gilbert J."/>
            <person name="Gill R."/>
            <person name="Gloeckner G."/>
            <person name="Gregory S.G."/>
            <person name="Gribble S."/>
            <person name="Griffiths C."/>
            <person name="Grocock R."/>
            <person name="Gu Y."/>
            <person name="Gwilliam R."/>
            <person name="Hamilton C."/>
            <person name="Hart E.A."/>
            <person name="Hawes A."/>
            <person name="Heath P.D."/>
            <person name="Heitmann K."/>
            <person name="Hennig S."/>
            <person name="Hernandez J."/>
            <person name="Hinzmann B."/>
            <person name="Ho S."/>
            <person name="Hoffs M."/>
            <person name="Howden P.J."/>
            <person name="Huckle E.J."/>
            <person name="Hume J."/>
            <person name="Hunt P.J."/>
            <person name="Hunt A.R."/>
            <person name="Isherwood J."/>
            <person name="Jacob L."/>
            <person name="Johnson D."/>
            <person name="Jones S."/>
            <person name="de Jong P.J."/>
            <person name="Joseph S.S."/>
            <person name="Keenan S."/>
            <person name="Kelly S."/>
            <person name="Kershaw J.K."/>
            <person name="Khan Z."/>
            <person name="Kioschis P."/>
            <person name="Klages S."/>
            <person name="Knights A.J."/>
            <person name="Kosiura A."/>
            <person name="Kovar-Smith C."/>
            <person name="Laird G.K."/>
            <person name="Langford C."/>
            <person name="Lawlor S."/>
            <person name="Leversha M."/>
            <person name="Lewis L."/>
            <person name="Liu W."/>
            <person name="Lloyd C."/>
            <person name="Lloyd D.M."/>
            <person name="Loulseged H."/>
            <person name="Loveland J.E."/>
            <person name="Lovell J.D."/>
            <person name="Lozado R."/>
            <person name="Lu J."/>
            <person name="Lyne R."/>
            <person name="Ma J."/>
            <person name="Maheshwari M."/>
            <person name="Matthews L.H."/>
            <person name="McDowall J."/>
            <person name="McLaren S."/>
            <person name="McMurray A."/>
            <person name="Meidl P."/>
            <person name="Meitinger T."/>
            <person name="Milne S."/>
            <person name="Miner G."/>
            <person name="Mistry S.L."/>
            <person name="Morgan M."/>
            <person name="Morris S."/>
            <person name="Mueller I."/>
            <person name="Mullikin J.C."/>
            <person name="Nguyen N."/>
            <person name="Nordsiek G."/>
            <person name="Nyakatura G."/>
            <person name="O'dell C.N."/>
            <person name="Okwuonu G."/>
            <person name="Palmer S."/>
            <person name="Pandian R."/>
            <person name="Parker D."/>
            <person name="Parrish J."/>
            <person name="Pasternak S."/>
            <person name="Patel D."/>
            <person name="Pearce A.V."/>
            <person name="Pearson D.M."/>
            <person name="Pelan S.E."/>
            <person name="Perez L."/>
            <person name="Porter K.M."/>
            <person name="Ramsey Y."/>
            <person name="Reichwald K."/>
            <person name="Rhodes S."/>
            <person name="Ridler K.A."/>
            <person name="Schlessinger D."/>
            <person name="Schueler M.G."/>
            <person name="Sehra H.K."/>
            <person name="Shaw-Smith C."/>
            <person name="Shen H."/>
            <person name="Sheridan E.M."/>
            <person name="Shownkeen R."/>
            <person name="Skuce C.D."/>
            <person name="Smith M.L."/>
            <person name="Sotheran E.C."/>
            <person name="Steingruber H.E."/>
            <person name="Steward C.A."/>
            <person name="Storey R."/>
            <person name="Swann R.M."/>
            <person name="Swarbreck D."/>
            <person name="Tabor P.E."/>
            <person name="Taudien S."/>
            <person name="Taylor T."/>
            <person name="Teague B."/>
            <person name="Thomas K."/>
            <person name="Thorpe A."/>
            <person name="Timms K."/>
            <person name="Tracey A."/>
            <person name="Trevanion S."/>
            <person name="Tromans A.C."/>
            <person name="d'Urso M."/>
            <person name="Verduzco D."/>
            <person name="Villasana D."/>
            <person name="Waldron L."/>
            <person name="Wall M."/>
            <person name="Wang Q."/>
            <person name="Warren J."/>
            <person name="Warry G.L."/>
            <person name="Wei X."/>
            <person name="West A."/>
            <person name="Whitehead S.L."/>
            <person name="Whiteley M.N."/>
            <person name="Wilkinson J.E."/>
            <person name="Willey D.L."/>
            <person name="Williams G."/>
            <person name="Williams L."/>
            <person name="Williamson A."/>
            <person name="Williamson H."/>
            <person name="Wilming L."/>
            <person name="Woodmansey R.L."/>
            <person name="Wray P.W."/>
            <person name="Yen J."/>
            <person name="Zhang J."/>
            <person name="Zhou J."/>
            <person name="Zoghbi H."/>
            <person name="Zorilla S."/>
            <person name="Buck D."/>
            <person name="Reinhardt R."/>
            <person name="Poustka A."/>
            <person name="Rosenthal A."/>
            <person name="Lehrach H."/>
            <person name="Meindl A."/>
            <person name="Minx P.J."/>
            <person name="Hillier L.W."/>
            <person name="Willard H.F."/>
            <person name="Wilson R.K."/>
            <person name="Waterston R.H."/>
            <person name="Rice C.M."/>
            <person name="Vaudin M."/>
            <person name="Coulson A."/>
            <person name="Nelson D.L."/>
            <person name="Weinstock G."/>
            <person name="Sulston J.E."/>
            <person name="Durbin R.M."/>
            <person name="Hubbard T."/>
            <person name="Gibbs R.A."/>
            <person name="Beck S."/>
            <person name="Rogers J."/>
            <person name="Bentley D.R."/>
        </authorList>
    </citation>
    <scope>NUCLEOTIDE SEQUENCE [LARGE SCALE GENOMIC DNA]</scope>
</reference>
<reference key="3">
    <citation type="submission" date="2005-07" db="EMBL/GenBank/DDBJ databases">
        <authorList>
            <person name="Mural R.J."/>
            <person name="Istrail S."/>
            <person name="Sutton G.G."/>
            <person name="Florea L."/>
            <person name="Halpern A.L."/>
            <person name="Mobarry C.M."/>
            <person name="Lippert R."/>
            <person name="Walenz B."/>
            <person name="Shatkay H."/>
            <person name="Dew I."/>
            <person name="Miller J.R."/>
            <person name="Flanigan M.J."/>
            <person name="Edwards N.J."/>
            <person name="Bolanos R."/>
            <person name="Fasulo D."/>
            <person name="Halldorsson B.V."/>
            <person name="Hannenhalli S."/>
            <person name="Turner R."/>
            <person name="Yooseph S."/>
            <person name="Lu F."/>
            <person name="Nusskern D.R."/>
            <person name="Shue B.C."/>
            <person name="Zheng X.H."/>
            <person name="Zhong F."/>
            <person name="Delcher A.L."/>
            <person name="Huson D.H."/>
            <person name="Kravitz S.A."/>
            <person name="Mouchard L."/>
            <person name="Reinert K."/>
            <person name="Remington K.A."/>
            <person name="Clark A.G."/>
            <person name="Waterman M.S."/>
            <person name="Eichler E.E."/>
            <person name="Adams M.D."/>
            <person name="Hunkapiller M.W."/>
            <person name="Myers E.W."/>
            <person name="Venter J.C."/>
        </authorList>
    </citation>
    <scope>NUCLEOTIDE SEQUENCE [LARGE SCALE GENOMIC DNA]</scope>
</reference>
<reference key="4">
    <citation type="journal article" date="1990" name="J. Biol. Chem.">
        <title>The 5'-flanking region of the synapsin I gene. A G+C-rich, TATA- and CAAT-less, phylogenetically conserved sequence with cell type-specific promoter function.</title>
        <authorList>
            <person name="Sauerwald A."/>
            <person name="Hoesche C."/>
            <person name="Oschwald R."/>
            <person name="Kilimann M.W."/>
        </authorList>
    </citation>
    <scope>NUCLEOTIDE SEQUENCE [GENOMIC DNA] OF 1-125</scope>
</reference>
<reference key="5">
    <citation type="journal article" date="2004" name="J. Med. Genet.">
        <title>Identification of a mutation in synapsin I, a synaptic vesicle protein, in a family with epilepsy.</title>
        <authorList>
            <person name="Garcia C.C."/>
            <person name="Blair H.J."/>
            <person name="Seager M."/>
            <person name="Coulthard A."/>
            <person name="Tennant S."/>
            <person name="Buddles M."/>
            <person name="Curtis A."/>
            <person name="Goodship J.A."/>
        </authorList>
    </citation>
    <scope>INVOLVEMENT IN EPILX1</scope>
</reference>
<reference key="6">
    <citation type="journal article" date="2005" name="J. Proteome Res.">
        <title>Phosphoproteomic analysis of synaptosomes from human cerebral cortex.</title>
        <authorList>
            <person name="DeGiorgis J.A."/>
            <person name="Jaffe H."/>
            <person name="Moreira J.E."/>
            <person name="Carlotti C.G. Jr."/>
            <person name="Leite J.P."/>
            <person name="Pant H.C."/>
            <person name="Dosemeci A."/>
        </authorList>
    </citation>
    <scope>PHOSPHORYLATION [LARGE SCALE ANALYSIS] AT SER-551 AND SER-553</scope>
    <scope>IDENTIFICATION BY MASS SPECTROMETRY [LARGE SCALE ANALYSIS]</scope>
    <source>
        <tissue>Brain cortex</tissue>
    </source>
</reference>
<reference key="7">
    <citation type="journal article" date="2011" name="Sci. Signal.">
        <title>System-wide temporal characterization of the proteome and phosphoproteome of human embryonic stem cell differentiation.</title>
        <authorList>
            <person name="Rigbolt K.T."/>
            <person name="Prokhorova T.A."/>
            <person name="Akimov V."/>
            <person name="Henningsen J."/>
            <person name="Johansen P.T."/>
            <person name="Kratchmarova I."/>
            <person name="Kassem M."/>
            <person name="Mann M."/>
            <person name="Olsen J.V."/>
            <person name="Blagoev B."/>
        </authorList>
    </citation>
    <scope>PHOSPHORYLATION [LARGE SCALE ANALYSIS] AT SER-551 AND SER-553</scope>
    <scope>IDENTIFICATION BY MASS SPECTROMETRY [LARGE SCALE ANALYSIS]</scope>
</reference>
<reference key="8">
    <citation type="journal article" date="2011" name="Hum. Mol. Genet.">
        <title>SYN1 loss-of-function mutations in autism and partial epilepsy cause impaired synaptic function.</title>
        <authorList>
            <person name="Fassio A."/>
            <person name="Patry L."/>
            <person name="Congia S."/>
            <person name="Onofri F."/>
            <person name="Piton A."/>
            <person name="Gauthier J."/>
            <person name="Pozzi D."/>
            <person name="Messa M."/>
            <person name="Defranchi E."/>
            <person name="Fadda M."/>
            <person name="Corradi A."/>
            <person name="Baldelli P."/>
            <person name="Lapointe L."/>
            <person name="St-Onge J."/>
            <person name="Meloche C."/>
            <person name="Mottron L."/>
            <person name="Valtorta F."/>
            <person name="Khoa Nguyen D."/>
            <person name="Rouleau G.A."/>
            <person name="Benfenati F."/>
            <person name="Cossette P."/>
        </authorList>
    </citation>
    <scope>VARIANTS XLID50 THR-550 AND 555-GLN--ASP-705 DEL</scope>
    <scope>CHARACTERIZATION OF VARIANTS XLID50 THR-550 AND 555-GLN--ASP-705 DEL</scope>
    <scope>VARIANT ALA-567</scope>
    <scope>CHARACTERIZATION OF VARIANT ALA-567</scope>
    <scope>INVOLVEMENT IN XLID50</scope>
    <scope>SUBCELLULAR LOCATION</scope>
    <scope>FUNCTION</scope>
    <scope>PHOSPHORYLATION</scope>
</reference>
<reference key="9">
    <citation type="journal article" date="2013" name="Hum. Mol. Genet.">
        <title>Epileptogenic Q555X SYN1 mutant triggers imbalances in release dynamics and short-term plasticity.</title>
        <authorList>
            <person name="Lignani G."/>
            <person name="Raimondi A."/>
            <person name="Ferrea E."/>
            <person name="Rocchi A."/>
            <person name="Paonessa F."/>
            <person name="Cesca F."/>
            <person name="Orlando M."/>
            <person name="Tkatch T."/>
            <person name="Valtorta F."/>
            <person name="Cossette P."/>
            <person name="Baldelli P."/>
            <person name="Benfenati F."/>
        </authorList>
    </citation>
    <scope>INTERACTION WITH SYN2</scope>
    <scope>FUNCTION</scope>
    <scope>CHARACTERIZATION OF VARIANT XLID50 555-GLN--ASP-705 DEL</scope>
</reference>
<reference key="10">
    <citation type="journal article" date="2017" name="Hum. Mol. Genet.">
        <title>A novel SYN1 missense mutation in non-syndromic X-linked intellectual disability affects synaptic vesicle life cycle, clustering and mobility.</title>
        <authorList>
            <person name="Guarnieri F.C."/>
            <person name="Pozzi D."/>
            <person name="Raimondi A."/>
            <person name="Fesce R."/>
            <person name="Valente M.M."/>
            <person name="Delvecchio V.S."/>
            <person name="Van Esch H."/>
            <person name="Matteoli M."/>
            <person name="Benfenati F."/>
            <person name="D'Adamo P."/>
            <person name="Valtorta F."/>
        </authorList>
    </citation>
    <scope>VARIANT XLID50 TRP-79</scope>
    <scope>CHARACTERIZATION OF VARIANT XLID50 TRP-79</scope>
</reference>
<sequence>MNYLRRRLSDSNFMANLPNGYMTDLQRPQPPPPPPGAHSPGATPGPGTATAERSSGVAPAASPAAPSPGSSGGGGFFSSLSNAVKQTTAAAAATFSEQVGGGSGGAGRGGAASRVLLVIDEPHTDWAKYFKGKKIHGEIDIKVEQAEFSDLNLVAHANGGFSVDMEVLRNGVKVVRSLKPDFVLIRQHAFSMARNGDYRSLVIGLQYAGIPSVNSLHSVYNFCDKPWVFAQMVRLHKKLGTEEFPLIDQTFYPNHKEMLSSTTYPVVVKMGHAHSGMGKVKVDNQHDFQDIASVVALTKTYATAEPFIDAKYDVRVQKIGQNYKAYMRTSVSGNWKTNTGSAMLEQIAMSDRYKLWVDTCSEIFGGLDICAVEALHGKDGRDHIIEVVGSSMPLIGDHQDEDKQLIVELVVNKMAQALPRQRQRDASPGRGSHGQTPSPGALPLGRQTSQQPAGPPAQQRPPPQGGPPQPGPGPQRQGPPLQQRPPPQGQQHLSGLGPPAGSPLPQRLPSPTSAPQQPASQAAPPTQGQGRQSRPVAGGPGAPPAARPPASPSPQRQAGPPQATRQTSVSGPAPPKASGAPPGGQQRQGPPQKPPGPAGPTRQASQAGPVPRTGPPTTQQPRPSGPGPAGRPKPQLAQKPSQDVPPPATAAAGGPPHPQLNKSQSLTNAFNLPEPAPPRPSLSQDEVKAETIRSLRKSFASLFSD</sequence>
<keyword id="KW-0009">Actin-binding</keyword>
<keyword id="KW-0025">Alternative splicing</keyword>
<keyword id="KW-0966">Cell projection</keyword>
<keyword id="KW-0968">Cytoplasmic vesicle</keyword>
<keyword id="KW-0225">Disease variant</keyword>
<keyword id="KW-0887">Epilepsy</keyword>
<keyword id="KW-0325">Glycoprotein</keyword>
<keyword id="KW-0333">Golgi apparatus</keyword>
<keyword id="KW-0991">Intellectual disability</keyword>
<keyword id="KW-0488">Methylation</keyword>
<keyword id="KW-0597">Phosphoprotein</keyword>
<keyword id="KW-1267">Proteomics identification</keyword>
<keyword id="KW-1185">Reference proteome</keyword>
<keyword id="KW-0677">Repeat</keyword>
<keyword id="KW-0770">Synapse</keyword>
<name>SYN1_HUMAN</name>
<feature type="chain" id="PRO_0000183018" description="Synapsin-1">
    <location>
        <begin position="1"/>
        <end position="705"/>
    </location>
</feature>
<feature type="region of interest" description="Disordered" evidence="5">
    <location>
        <begin position="1"/>
        <end position="73"/>
    </location>
</feature>
<feature type="region of interest" description="A">
    <location>
        <begin position="1"/>
        <end position="28"/>
    </location>
</feature>
<feature type="region of interest" description="B; linker">
    <location>
        <begin position="29"/>
        <end position="112"/>
    </location>
</feature>
<feature type="region of interest" description="C; actin-binding and synaptic-vesicle binding">
    <location>
        <begin position="113"/>
        <end position="420"/>
    </location>
</feature>
<feature type="region of interest" description="Disordered" evidence="5">
    <location>
        <begin position="418"/>
        <end position="689"/>
    </location>
</feature>
<feature type="region of interest" description="D; Pro-rich linker">
    <location>
        <begin position="421"/>
        <end position="655"/>
    </location>
</feature>
<feature type="region of interest" description="E">
    <location>
        <begin position="656"/>
        <end position="705"/>
    </location>
</feature>
<feature type="compositionally biased region" description="Pro residues" evidence="5">
    <location>
        <begin position="28"/>
        <end position="37"/>
    </location>
</feature>
<feature type="compositionally biased region" description="Low complexity" evidence="5">
    <location>
        <begin position="38"/>
        <end position="69"/>
    </location>
</feature>
<feature type="compositionally biased region" description="Pro residues" evidence="5">
    <location>
        <begin position="453"/>
        <end position="473"/>
    </location>
</feature>
<feature type="compositionally biased region" description="Low complexity" evidence="5">
    <location>
        <begin position="489"/>
        <end position="499"/>
    </location>
</feature>
<feature type="compositionally biased region" description="Low complexity" evidence="5">
    <location>
        <begin position="509"/>
        <end position="537"/>
    </location>
</feature>
<feature type="compositionally biased region" description="Pro residues" evidence="5">
    <location>
        <begin position="541"/>
        <end position="552"/>
    </location>
</feature>
<feature type="compositionally biased region" description="Low complexity" evidence="5">
    <location>
        <begin position="553"/>
        <end position="590"/>
    </location>
</feature>
<feature type="compositionally biased region" description="Low complexity" evidence="5">
    <location>
        <begin position="608"/>
        <end position="622"/>
    </location>
</feature>
<feature type="compositionally biased region" description="Polar residues" evidence="5">
    <location>
        <begin position="660"/>
        <end position="670"/>
    </location>
</feature>
<feature type="modified residue" description="Phosphoserine; by CaMK1 and PKA" evidence="3">
    <location>
        <position position="9"/>
    </location>
</feature>
<feature type="modified residue" description="Phosphoserine" evidence="2">
    <location>
        <position position="39"/>
    </location>
</feature>
<feature type="modified residue" description="Phosphoserine" evidence="3">
    <location>
        <position position="62"/>
    </location>
</feature>
<feature type="modified residue" description="Phosphoserine" evidence="3">
    <location>
        <position position="67"/>
    </location>
</feature>
<feature type="modified residue" description="Phosphotyrosine" evidence="2">
    <location>
        <position position="312"/>
    </location>
</feature>
<feature type="modified residue" description="Phosphoserine" evidence="2">
    <location>
        <position position="427"/>
    </location>
</feature>
<feature type="modified residue" description="Omega-N-methylarginine" evidence="2">
    <location>
        <position position="430"/>
    </location>
</feature>
<feature type="modified residue" description="Phosphoserine; alternate" evidence="2">
    <location>
        <position position="432"/>
    </location>
</feature>
<feature type="modified residue" description="Phosphothreonine" evidence="3">
    <location>
        <position position="436"/>
    </location>
</feature>
<feature type="modified residue" description="Phosphoserine" evidence="2">
    <location>
        <position position="438"/>
    </location>
</feature>
<feature type="modified residue" description="Omega-N-methylarginine" evidence="2">
    <location>
        <position position="476"/>
    </location>
</feature>
<feature type="modified residue" description="Omega-N-methylarginine" evidence="2">
    <location>
        <position position="534"/>
    </location>
</feature>
<feature type="modified residue" description="Omega-N-methylarginine" evidence="2">
    <location>
        <position position="547"/>
    </location>
</feature>
<feature type="modified residue" description="Phosphoserine; by PDPK1" evidence="11 12">
    <location>
        <position position="551"/>
    </location>
</feature>
<feature type="modified residue" description="Phosphoserine" evidence="11 12">
    <location>
        <position position="553"/>
    </location>
</feature>
<feature type="modified residue" description="Omega-N-methylarginine" evidence="2">
    <location>
        <position position="556"/>
    </location>
</feature>
<feature type="modified residue" description="Phosphoserine; by CaMK2" evidence="4">
    <location>
        <position position="568"/>
    </location>
</feature>
<feature type="modified residue" description="Phosphoserine; by CaMK2" evidence="4">
    <location>
        <position position="605"/>
    </location>
</feature>
<feature type="modified residue" description="Omega-N-methylarginine" evidence="2">
    <location>
        <position position="622"/>
    </location>
</feature>
<feature type="modified residue" description="Phosphoserine" evidence="2">
    <location>
        <position position="663"/>
    </location>
</feature>
<feature type="modified residue" description="Phosphoserine" evidence="2">
    <location>
        <position position="665"/>
    </location>
</feature>
<feature type="modified residue" description="Asymmetric dimethylarginine" evidence="2">
    <location>
        <position position="679"/>
    </location>
</feature>
<feature type="modified residue" description="Phosphoserine" evidence="2">
    <location>
        <position position="683"/>
    </location>
</feature>
<feature type="glycosylation site" description="O-linked (GlcNAc) serine" evidence="1">
    <location>
        <position position="55"/>
    </location>
</feature>
<feature type="glycosylation site" description="O-linked (GlcNAc) threonine" evidence="1">
    <location>
        <position position="87"/>
    </location>
</feature>
<feature type="glycosylation site" description="O-linked (GlcNAc) serine" evidence="1">
    <location>
        <position position="96"/>
    </location>
</feature>
<feature type="glycosylation site" description="O-linked (GlcNAc) serine" evidence="1">
    <location>
        <position position="103"/>
    </location>
</feature>
<feature type="glycosylation site" description="O-linked (GlcNAc) serine" evidence="1">
    <location>
        <position position="261"/>
    </location>
</feature>
<feature type="glycosylation site" description="O-linked (GlcNAc) serine; alternate" evidence="1">
    <location>
        <position position="432"/>
    </location>
</feature>
<feature type="glycosylation site" description="O-linked (GlcNAc) threonine" evidence="1">
    <location>
        <position position="526"/>
    </location>
</feature>
<feature type="glycosylation site" description="O-linked (GlcNAc) threonine" evidence="1">
    <location>
        <position position="564"/>
    </location>
</feature>
<feature type="glycosylation site" description="O-linked (GlcNAc) serine" evidence="1">
    <location>
        <position position="578"/>
    </location>
</feature>
<feature type="splice variant" id="VSP_006316" description="In isoform IB." evidence="10">
    <original>NKSQSLTNA</original>
    <variation>KASPAQAQP</variation>
    <location>
        <begin position="661"/>
        <end position="669"/>
    </location>
</feature>
<feature type="splice variant" id="VSP_006317" description="In isoform IB." evidence="10">
    <location>
        <begin position="670"/>
        <end position="705"/>
    </location>
</feature>
<feature type="sequence variant" id="VAR_086821" description="In XLID50; results in reduced synaptic vesicle mobility, increased clustering of synaptic vesicles at presynatptic terminals and increased frequency of miniature excitatory postsynaptic currents; dbSNP:rs2057941303." evidence="9">
    <original>S</original>
    <variation>W</variation>
    <location>
        <position position="79"/>
    </location>
</feature>
<feature type="sequence variant" id="VAR_086822" description="In XLID50; uncertain significance; no effect on phosphorylation by CaMK2 and MAPK1; has no effect on axon elongation when tested in SYN1-knockout mouse neurons; slightly reduced protein targeting to presynapse; dbSNP:rs397514680." evidence="7">
    <original>A</original>
    <variation>T</variation>
    <location>
        <position position="550"/>
    </location>
</feature>
<feature type="sequence variant" id="VAR_086823" description="In XLID50; affects excitatory and inhibitory synaptic transmission leading to neuronal hyperexcitability; fails to rescue defective synaptic vesicle exocytosis in SYN1-knockout mouse neurons; results in severely decreased phosphorylation by CaMK2 and MAPK1; results in delayed axon elongation when tested in SYN1-knockout mouse neurons; severely reduced interaction with SYN2; has no effect on protein targeting to presynapse." evidence="7 8">
    <location>
        <begin position="555"/>
        <end position="705"/>
    </location>
</feature>
<feature type="sequence variant" id="VAR_086824" description="No effect on phosphorylation by CaMK2 and MAPK1; has no effect on axon elongation when tested in SYN1-knockout mouse neurons; slightly reduced protein targeting to presynapse; dbSNP:rs200533370." evidence="7">
    <original>T</original>
    <variation>A</variation>
    <location>
        <position position="567"/>
    </location>
</feature>
<feature type="sequence conflict" description="In Ref. 1; AAC41930/AAC41931." evidence="10" ref="1">
    <original>E</original>
    <variation>G</variation>
    <location>
        <position position="138"/>
    </location>
</feature>
<feature type="sequence conflict" description="In Ref. 1; AAC41930/AAC41931." evidence="10" ref="1">
    <original>R</original>
    <variation>A</variation>
    <location>
        <position position="631"/>
    </location>
</feature>